<feature type="chain" id="PRO_0000237663" description="Uncharacterized protein YOR192C-C">
    <location>
        <begin position="1"/>
        <end position="78"/>
    </location>
</feature>
<sequence>MMIIIFIELCRIADSLSWIPKSLRRTSSTFYIPNIIALLKMESQQLSQNSPTFQKHTPIGHINHDQYNSDSGSYYTLM</sequence>
<dbReference type="EMBL" id="Z75101">
    <property type="status" value="NOT_ANNOTATED_CDS"/>
    <property type="molecule type" value="Genomic_DNA"/>
</dbReference>
<dbReference type="EMBL" id="BK006948">
    <property type="protein sequence ID" value="DAA10965.1"/>
    <property type="molecule type" value="Genomic_DNA"/>
</dbReference>
<dbReference type="RefSeq" id="NP_878173.1">
    <property type="nucleotide sequence ID" value="NM_001184668.1"/>
</dbReference>
<dbReference type="BioGRID" id="37027">
    <property type="interactions" value="19"/>
</dbReference>
<dbReference type="FunCoup" id="Q3E736">
    <property type="interactions" value="9"/>
</dbReference>
<dbReference type="IntAct" id="Q3E736">
    <property type="interactions" value="1"/>
</dbReference>
<dbReference type="MINT" id="Q3E736"/>
<dbReference type="PaxDb" id="4932-YOR192C-C"/>
<dbReference type="PeptideAtlas" id="Q3E736"/>
<dbReference type="EnsemblFungi" id="YOR192C-C_mRNA">
    <property type="protein sequence ID" value="YOR192C-C"/>
    <property type="gene ID" value="YOR192C-C"/>
</dbReference>
<dbReference type="GeneID" id="1466485"/>
<dbReference type="KEGG" id="sce:YOR192C-C"/>
<dbReference type="AGR" id="SGD:S000028857"/>
<dbReference type="SGD" id="S000028857">
    <property type="gene designation" value="YOR192C-C"/>
</dbReference>
<dbReference type="VEuPathDB" id="FungiDB:YOR192C-C"/>
<dbReference type="GeneTree" id="ENSGT00940000178779"/>
<dbReference type="HOGENOM" id="CLU_197763_0_0_1"/>
<dbReference type="InParanoid" id="Q3E736"/>
<dbReference type="OrthoDB" id="4071477at2759"/>
<dbReference type="BioCyc" id="YEAST:G3O-33915-MONOMER"/>
<dbReference type="PRO" id="PR:Q3E736"/>
<dbReference type="Proteomes" id="UP000002311">
    <property type="component" value="Chromosome XV"/>
</dbReference>
<dbReference type="RNAct" id="Q3E736">
    <property type="molecule type" value="protein"/>
</dbReference>
<reference key="1">
    <citation type="journal article" date="1997" name="Nature">
        <title>The nucleotide sequence of Saccharomyces cerevisiae chromosome XV.</title>
        <authorList>
            <person name="Dujon B."/>
            <person name="Albermann K."/>
            <person name="Aldea M."/>
            <person name="Alexandraki D."/>
            <person name="Ansorge W."/>
            <person name="Arino J."/>
            <person name="Benes V."/>
            <person name="Bohn C."/>
            <person name="Bolotin-Fukuhara M."/>
            <person name="Bordonne R."/>
            <person name="Boyer J."/>
            <person name="Camasses A."/>
            <person name="Casamayor A."/>
            <person name="Casas C."/>
            <person name="Cheret G."/>
            <person name="Cziepluch C."/>
            <person name="Daignan-Fornier B."/>
            <person name="Dang V.-D."/>
            <person name="de Haan M."/>
            <person name="Delius H."/>
            <person name="Durand P."/>
            <person name="Fairhead C."/>
            <person name="Feldmann H."/>
            <person name="Gaillon L."/>
            <person name="Galisson F."/>
            <person name="Gamo F.-J."/>
            <person name="Gancedo C."/>
            <person name="Goffeau A."/>
            <person name="Goulding S.E."/>
            <person name="Grivell L.A."/>
            <person name="Habbig B."/>
            <person name="Hand N.J."/>
            <person name="Hani J."/>
            <person name="Hattenhorst U."/>
            <person name="Hebling U."/>
            <person name="Hernando Y."/>
            <person name="Herrero E."/>
            <person name="Heumann K."/>
            <person name="Hiesel R."/>
            <person name="Hilger F."/>
            <person name="Hofmann B."/>
            <person name="Hollenberg C.P."/>
            <person name="Hughes B."/>
            <person name="Jauniaux J.-C."/>
            <person name="Kalogeropoulos A."/>
            <person name="Katsoulou C."/>
            <person name="Kordes E."/>
            <person name="Lafuente M.J."/>
            <person name="Landt O."/>
            <person name="Louis E.J."/>
            <person name="Maarse A.C."/>
            <person name="Madania A."/>
            <person name="Mannhaupt G."/>
            <person name="Marck C."/>
            <person name="Martin R.P."/>
            <person name="Mewes H.-W."/>
            <person name="Michaux G."/>
            <person name="Paces V."/>
            <person name="Parle-McDermott A.G."/>
            <person name="Pearson B.M."/>
            <person name="Perrin A."/>
            <person name="Pettersson B."/>
            <person name="Poch O."/>
            <person name="Pohl T.M."/>
            <person name="Poirey R."/>
            <person name="Portetelle D."/>
            <person name="Pujol A."/>
            <person name="Purnelle B."/>
            <person name="Ramezani Rad M."/>
            <person name="Rechmann S."/>
            <person name="Schwager C."/>
            <person name="Schweizer M."/>
            <person name="Sor F."/>
            <person name="Sterky F."/>
            <person name="Tarassov I.A."/>
            <person name="Teodoru C."/>
            <person name="Tettelin H."/>
            <person name="Thierry A."/>
            <person name="Tobiasch E."/>
            <person name="Tzermia M."/>
            <person name="Uhlen M."/>
            <person name="Unseld M."/>
            <person name="Valens M."/>
            <person name="Vandenbol M."/>
            <person name="Vetter I."/>
            <person name="Vlcek C."/>
            <person name="Voet M."/>
            <person name="Volckaert G."/>
            <person name="Voss H."/>
            <person name="Wambutt R."/>
            <person name="Wedler H."/>
            <person name="Wiemann S."/>
            <person name="Winsor B."/>
            <person name="Wolfe K.H."/>
            <person name="Zollner A."/>
            <person name="Zumstein E."/>
            <person name="Kleine K."/>
        </authorList>
    </citation>
    <scope>NUCLEOTIDE SEQUENCE [LARGE SCALE GENOMIC DNA]</scope>
    <source>
        <strain>ATCC 204508 / S288c</strain>
    </source>
</reference>
<reference key="2">
    <citation type="journal article" date="2014" name="G3 (Bethesda)">
        <title>The reference genome sequence of Saccharomyces cerevisiae: Then and now.</title>
        <authorList>
            <person name="Engel S.R."/>
            <person name="Dietrich F.S."/>
            <person name="Fisk D.G."/>
            <person name="Binkley G."/>
            <person name="Balakrishnan R."/>
            <person name="Costanzo M.C."/>
            <person name="Dwight S.S."/>
            <person name="Hitz B.C."/>
            <person name="Karra K."/>
            <person name="Nash R.S."/>
            <person name="Weng S."/>
            <person name="Wong E.D."/>
            <person name="Lloyd P."/>
            <person name="Skrzypek M.S."/>
            <person name="Miyasato S.R."/>
            <person name="Simison M."/>
            <person name="Cherry J.M."/>
        </authorList>
    </citation>
    <scope>GENOME REANNOTATION</scope>
    <source>
        <strain>ATCC 204508 / S288c</strain>
    </source>
</reference>
<reference key="3">
    <citation type="journal article" date="2002" name="Genome Res.">
        <title>Parallel identification of new genes in Saccharomyces cerevisiae.</title>
        <authorList>
            <person name="Oshiro G."/>
            <person name="Wodicka L.M."/>
            <person name="Washburn M.P."/>
            <person name="Yates J.R. III"/>
            <person name="Lockhart D.J."/>
            <person name="Winzeler E.A."/>
        </authorList>
    </citation>
    <scope>IDENTIFICATION BY MASS SPECTROMETRY</scope>
</reference>
<gene>
    <name type="ordered locus">YOR192C-C</name>
</gene>
<keyword id="KW-1185">Reference proteome</keyword>
<proteinExistence type="evidence at protein level"/>
<organism>
    <name type="scientific">Saccharomyces cerevisiae (strain ATCC 204508 / S288c)</name>
    <name type="common">Baker's yeast</name>
    <dbReference type="NCBI Taxonomy" id="559292"/>
    <lineage>
        <taxon>Eukaryota</taxon>
        <taxon>Fungi</taxon>
        <taxon>Dikarya</taxon>
        <taxon>Ascomycota</taxon>
        <taxon>Saccharomycotina</taxon>
        <taxon>Saccharomycetes</taxon>
        <taxon>Saccharomycetales</taxon>
        <taxon>Saccharomycetaceae</taxon>
        <taxon>Saccharomyces</taxon>
    </lineage>
</organism>
<accession>Q3E736</accession>
<accession>D6W2P9</accession>
<protein>
    <recommendedName>
        <fullName>Uncharacterized protein YOR192C-C</fullName>
    </recommendedName>
</protein>
<name>YO192_YEAST</name>